<proteinExistence type="inferred from homology"/>
<gene>
    <name evidence="1" type="primary">tatB</name>
    <name type="ordered locus">BAV3324</name>
</gene>
<name>TATB_BORA1</name>
<feature type="chain" id="PRO_0000301143" description="Sec-independent protein translocase protein TatB">
    <location>
        <begin position="1"/>
        <end position="165"/>
    </location>
</feature>
<feature type="transmembrane region" description="Helical" evidence="1">
    <location>
        <begin position="1"/>
        <end position="21"/>
    </location>
</feature>
<feature type="region of interest" description="Disordered" evidence="2">
    <location>
        <begin position="67"/>
        <end position="165"/>
    </location>
</feature>
<feature type="compositionally biased region" description="Polar residues" evidence="2">
    <location>
        <begin position="67"/>
        <end position="84"/>
    </location>
</feature>
<feature type="compositionally biased region" description="Low complexity" evidence="2">
    <location>
        <begin position="127"/>
        <end position="159"/>
    </location>
</feature>
<comment type="function">
    <text evidence="1">Part of the twin-arginine translocation (Tat) system that transports large folded proteins containing a characteristic twin-arginine motif in their signal peptide across membranes. Together with TatC, TatB is part of a receptor directly interacting with Tat signal peptides. TatB may form an oligomeric binding site that transiently accommodates folded Tat precursor proteins before their translocation.</text>
</comment>
<comment type="subunit">
    <text evidence="1">The Tat system comprises two distinct complexes: a TatABC complex, containing multiple copies of TatA, TatB and TatC subunits, and a separate TatA complex, containing only TatA subunits. Substrates initially bind to the TatABC complex, which probably triggers association of the separate TatA complex to form the active translocon.</text>
</comment>
<comment type="subcellular location">
    <subcellularLocation>
        <location evidence="1">Cell inner membrane</location>
        <topology evidence="1">Single-pass membrane protein</topology>
    </subcellularLocation>
</comment>
<comment type="similarity">
    <text evidence="1">Belongs to the TatB family.</text>
</comment>
<evidence type="ECO:0000255" key="1">
    <source>
        <dbReference type="HAMAP-Rule" id="MF_00237"/>
    </source>
</evidence>
<evidence type="ECO:0000256" key="2">
    <source>
        <dbReference type="SAM" id="MobiDB-lite"/>
    </source>
</evidence>
<reference key="1">
    <citation type="journal article" date="2006" name="J. Bacteriol.">
        <title>Comparison of the genome sequence of the poultry pathogen Bordetella avium with those of B. bronchiseptica, B. pertussis, and B. parapertussis reveals extensive diversity in surface structures associated with host interaction.</title>
        <authorList>
            <person name="Sebaihia M."/>
            <person name="Preston A."/>
            <person name="Maskell D.J."/>
            <person name="Kuzmiak H."/>
            <person name="Connell T.D."/>
            <person name="King N.D."/>
            <person name="Orndorff P.E."/>
            <person name="Miyamoto D.M."/>
            <person name="Thomson N.R."/>
            <person name="Harris D."/>
            <person name="Goble A."/>
            <person name="Lord A."/>
            <person name="Murphy L."/>
            <person name="Quail M.A."/>
            <person name="Rutter S."/>
            <person name="Squares R."/>
            <person name="Squares S."/>
            <person name="Woodward J."/>
            <person name="Parkhill J."/>
            <person name="Temple L.M."/>
        </authorList>
    </citation>
    <scope>NUCLEOTIDE SEQUENCE [LARGE SCALE GENOMIC DNA]</scope>
    <source>
        <strain>197N</strain>
    </source>
</reference>
<dbReference type="EMBL" id="AM167904">
    <property type="protein sequence ID" value="CAJ50934.1"/>
    <property type="molecule type" value="Genomic_DNA"/>
</dbReference>
<dbReference type="RefSeq" id="WP_012418961.1">
    <property type="nucleotide sequence ID" value="NC_010645.1"/>
</dbReference>
<dbReference type="SMR" id="Q2KTS6"/>
<dbReference type="STRING" id="360910.BAV3324"/>
<dbReference type="KEGG" id="bav:BAV3324"/>
<dbReference type="eggNOG" id="COG1826">
    <property type="taxonomic scope" value="Bacteria"/>
</dbReference>
<dbReference type="HOGENOM" id="CLU_086034_1_1_4"/>
<dbReference type="OrthoDB" id="9816005at2"/>
<dbReference type="Proteomes" id="UP000001977">
    <property type="component" value="Chromosome"/>
</dbReference>
<dbReference type="GO" id="GO:0033281">
    <property type="term" value="C:TAT protein transport complex"/>
    <property type="evidence" value="ECO:0007669"/>
    <property type="project" value="UniProtKB-UniRule"/>
</dbReference>
<dbReference type="GO" id="GO:0008320">
    <property type="term" value="F:protein transmembrane transporter activity"/>
    <property type="evidence" value="ECO:0007669"/>
    <property type="project" value="UniProtKB-UniRule"/>
</dbReference>
<dbReference type="GO" id="GO:0043953">
    <property type="term" value="P:protein transport by the Tat complex"/>
    <property type="evidence" value="ECO:0007669"/>
    <property type="project" value="UniProtKB-UniRule"/>
</dbReference>
<dbReference type="Gene3D" id="1.20.5.3310">
    <property type="match status" value="1"/>
</dbReference>
<dbReference type="HAMAP" id="MF_00237">
    <property type="entry name" value="TatB"/>
    <property type="match status" value="1"/>
</dbReference>
<dbReference type="InterPro" id="IPR003369">
    <property type="entry name" value="TatA/B/E"/>
</dbReference>
<dbReference type="InterPro" id="IPR018448">
    <property type="entry name" value="TatB"/>
</dbReference>
<dbReference type="NCBIfam" id="TIGR01410">
    <property type="entry name" value="tatB"/>
    <property type="match status" value="1"/>
</dbReference>
<dbReference type="PANTHER" id="PTHR33162">
    <property type="entry name" value="SEC-INDEPENDENT PROTEIN TRANSLOCASE PROTEIN TATA, CHLOROPLASTIC"/>
    <property type="match status" value="1"/>
</dbReference>
<dbReference type="PANTHER" id="PTHR33162:SF1">
    <property type="entry name" value="SEC-INDEPENDENT PROTEIN TRANSLOCASE PROTEIN TATA, CHLOROPLASTIC"/>
    <property type="match status" value="1"/>
</dbReference>
<dbReference type="Pfam" id="PF02416">
    <property type="entry name" value="TatA_B_E"/>
    <property type="match status" value="1"/>
</dbReference>
<dbReference type="PRINTS" id="PR01506">
    <property type="entry name" value="TATBPROTEIN"/>
</dbReference>
<protein>
    <recommendedName>
        <fullName evidence="1">Sec-independent protein translocase protein TatB</fullName>
    </recommendedName>
</protein>
<keyword id="KW-0997">Cell inner membrane</keyword>
<keyword id="KW-1003">Cell membrane</keyword>
<keyword id="KW-0472">Membrane</keyword>
<keyword id="KW-0653">Protein transport</keyword>
<keyword id="KW-1185">Reference proteome</keyword>
<keyword id="KW-0811">Translocation</keyword>
<keyword id="KW-0812">Transmembrane</keyword>
<keyword id="KW-1133">Transmembrane helix</keyword>
<keyword id="KW-0813">Transport</keyword>
<accession>Q2KTS6</accession>
<organism>
    <name type="scientific">Bordetella avium (strain 197N)</name>
    <dbReference type="NCBI Taxonomy" id="360910"/>
    <lineage>
        <taxon>Bacteria</taxon>
        <taxon>Pseudomonadati</taxon>
        <taxon>Pseudomonadota</taxon>
        <taxon>Betaproteobacteria</taxon>
        <taxon>Burkholderiales</taxon>
        <taxon>Alcaligenaceae</taxon>
        <taxon>Bordetella</taxon>
    </lineage>
</organism>
<sequence length="165" mass="17461">MFDVSFTELIVIGVVALIVLGPERLPKVARTVGHLLGRAQRYVHDVKSDIQREIELDELRKFKQQIDSTAQDVNQSLRSATDSLRASGDSLRAELDDTARTVNEAAADIQRTIAPHPAITAETDTSKLPGTPATLPATAAAEPTPAAPAASQAEAPKSPSTGNAT</sequence>